<proteinExistence type="inferred from homology"/>
<accession>Q81LB0</accession>
<accession>Q6HSR5</accession>
<accession>Q6KM06</accession>
<comment type="function">
    <text evidence="1">Pyrophosphatase that catalyzes the hydrolysis of nucleoside triphosphates to their monophosphate derivatives, with a high preference for the non-canonical purine nucleotides XTP (xanthosine triphosphate), dITP (deoxyinosine triphosphate) and ITP. Seems to function as a house-cleaning enzyme that removes non-canonical purine nucleotides from the nucleotide pool, thus preventing their incorporation into DNA/RNA and avoiding chromosomal lesions.</text>
</comment>
<comment type="catalytic activity">
    <reaction evidence="1">
        <text>XTP + H2O = XMP + diphosphate + H(+)</text>
        <dbReference type="Rhea" id="RHEA:28610"/>
        <dbReference type="ChEBI" id="CHEBI:15377"/>
        <dbReference type="ChEBI" id="CHEBI:15378"/>
        <dbReference type="ChEBI" id="CHEBI:33019"/>
        <dbReference type="ChEBI" id="CHEBI:57464"/>
        <dbReference type="ChEBI" id="CHEBI:61314"/>
        <dbReference type="EC" id="3.6.1.66"/>
    </reaction>
</comment>
<comment type="catalytic activity">
    <reaction evidence="1">
        <text>dITP + H2O = dIMP + diphosphate + H(+)</text>
        <dbReference type="Rhea" id="RHEA:28342"/>
        <dbReference type="ChEBI" id="CHEBI:15377"/>
        <dbReference type="ChEBI" id="CHEBI:15378"/>
        <dbReference type="ChEBI" id="CHEBI:33019"/>
        <dbReference type="ChEBI" id="CHEBI:61194"/>
        <dbReference type="ChEBI" id="CHEBI:61382"/>
        <dbReference type="EC" id="3.6.1.66"/>
    </reaction>
</comment>
<comment type="catalytic activity">
    <reaction evidence="1">
        <text>ITP + H2O = IMP + diphosphate + H(+)</text>
        <dbReference type="Rhea" id="RHEA:29399"/>
        <dbReference type="ChEBI" id="CHEBI:15377"/>
        <dbReference type="ChEBI" id="CHEBI:15378"/>
        <dbReference type="ChEBI" id="CHEBI:33019"/>
        <dbReference type="ChEBI" id="CHEBI:58053"/>
        <dbReference type="ChEBI" id="CHEBI:61402"/>
        <dbReference type="EC" id="3.6.1.66"/>
    </reaction>
</comment>
<comment type="cofactor">
    <cofactor evidence="1">
        <name>Mg(2+)</name>
        <dbReference type="ChEBI" id="CHEBI:18420"/>
    </cofactor>
    <text evidence="1">Binds 1 Mg(2+) ion per subunit.</text>
</comment>
<comment type="subunit">
    <text evidence="1">Homodimer.</text>
</comment>
<comment type="similarity">
    <text evidence="1">Belongs to the HAM1 NTPase family.</text>
</comment>
<comment type="sequence caution" evidence="2">
    <conflict type="erroneous initiation">
        <sequence resource="EMBL-CDS" id="AAT56674"/>
    </conflict>
</comment>
<dbReference type="EC" id="3.6.1.66" evidence="1"/>
<dbReference type="EMBL" id="AE016879">
    <property type="protein sequence ID" value="AAP28412.1"/>
    <property type="molecule type" value="Genomic_DNA"/>
</dbReference>
<dbReference type="EMBL" id="AE017334">
    <property type="protein sequence ID" value="AAT33838.1"/>
    <property type="molecule type" value="Genomic_DNA"/>
</dbReference>
<dbReference type="EMBL" id="AE017225">
    <property type="protein sequence ID" value="AAT56674.1"/>
    <property type="status" value="ALT_INIT"/>
    <property type="molecule type" value="Genomic_DNA"/>
</dbReference>
<dbReference type="RefSeq" id="NP_846926.1">
    <property type="nucleotide sequence ID" value="NC_003997.3"/>
</dbReference>
<dbReference type="RefSeq" id="WP_000815943.1">
    <property type="nucleotide sequence ID" value="NZ_WXXJ01000001.1"/>
</dbReference>
<dbReference type="SMR" id="Q81LB0"/>
<dbReference type="IntAct" id="Q81LB0">
    <property type="interactions" value="1"/>
</dbReference>
<dbReference type="STRING" id="261594.GBAA_4714"/>
<dbReference type="DNASU" id="1083679"/>
<dbReference type="GeneID" id="45024353"/>
<dbReference type="KEGG" id="ban:BA_4714"/>
<dbReference type="KEGG" id="banh:HYU01_22985"/>
<dbReference type="KEGG" id="bar:GBAA_4714"/>
<dbReference type="KEGG" id="bat:BAS4376"/>
<dbReference type="PATRIC" id="fig|198094.11.peg.4679"/>
<dbReference type="eggNOG" id="COG0127">
    <property type="taxonomic scope" value="Bacteria"/>
</dbReference>
<dbReference type="HOGENOM" id="CLU_082080_0_2_9"/>
<dbReference type="OMA" id="YDPIFQP"/>
<dbReference type="OrthoDB" id="9807456at2"/>
<dbReference type="Proteomes" id="UP000000427">
    <property type="component" value="Chromosome"/>
</dbReference>
<dbReference type="Proteomes" id="UP000000594">
    <property type="component" value="Chromosome"/>
</dbReference>
<dbReference type="GO" id="GO:0005829">
    <property type="term" value="C:cytosol"/>
    <property type="evidence" value="ECO:0007669"/>
    <property type="project" value="TreeGrafter"/>
</dbReference>
<dbReference type="GO" id="GO:0035870">
    <property type="term" value="F:dITP diphosphatase activity"/>
    <property type="evidence" value="ECO:0007669"/>
    <property type="project" value="RHEA"/>
</dbReference>
<dbReference type="GO" id="GO:0036220">
    <property type="term" value="F:ITP diphosphatase activity"/>
    <property type="evidence" value="ECO:0007669"/>
    <property type="project" value="UniProtKB-EC"/>
</dbReference>
<dbReference type="GO" id="GO:0046872">
    <property type="term" value="F:metal ion binding"/>
    <property type="evidence" value="ECO:0007669"/>
    <property type="project" value="UniProtKB-KW"/>
</dbReference>
<dbReference type="GO" id="GO:0000166">
    <property type="term" value="F:nucleotide binding"/>
    <property type="evidence" value="ECO:0007669"/>
    <property type="project" value="UniProtKB-KW"/>
</dbReference>
<dbReference type="GO" id="GO:0017111">
    <property type="term" value="F:ribonucleoside triphosphate phosphatase activity"/>
    <property type="evidence" value="ECO:0007669"/>
    <property type="project" value="InterPro"/>
</dbReference>
<dbReference type="GO" id="GO:0036222">
    <property type="term" value="F:XTP diphosphatase activity"/>
    <property type="evidence" value="ECO:0007669"/>
    <property type="project" value="RHEA"/>
</dbReference>
<dbReference type="GO" id="GO:0009117">
    <property type="term" value="P:nucleotide metabolic process"/>
    <property type="evidence" value="ECO:0007669"/>
    <property type="project" value="UniProtKB-KW"/>
</dbReference>
<dbReference type="GO" id="GO:0009146">
    <property type="term" value="P:purine nucleoside triphosphate catabolic process"/>
    <property type="evidence" value="ECO:0007669"/>
    <property type="project" value="UniProtKB-UniRule"/>
</dbReference>
<dbReference type="CDD" id="cd00515">
    <property type="entry name" value="HAM1"/>
    <property type="match status" value="1"/>
</dbReference>
<dbReference type="FunFam" id="3.90.950.10:FF:000001">
    <property type="entry name" value="dITP/XTP pyrophosphatase"/>
    <property type="match status" value="1"/>
</dbReference>
<dbReference type="Gene3D" id="3.90.950.10">
    <property type="match status" value="1"/>
</dbReference>
<dbReference type="HAMAP" id="MF_01405">
    <property type="entry name" value="Non_canon_purine_NTPase"/>
    <property type="match status" value="1"/>
</dbReference>
<dbReference type="InterPro" id="IPR020922">
    <property type="entry name" value="dITP/XTP_pyrophosphatase"/>
</dbReference>
<dbReference type="InterPro" id="IPR029001">
    <property type="entry name" value="ITPase-like_fam"/>
</dbReference>
<dbReference type="InterPro" id="IPR002637">
    <property type="entry name" value="RdgB/HAM1"/>
</dbReference>
<dbReference type="NCBIfam" id="NF011397">
    <property type="entry name" value="PRK14822.1"/>
    <property type="match status" value="1"/>
</dbReference>
<dbReference type="NCBIfam" id="TIGR00042">
    <property type="entry name" value="RdgB/HAM1 family non-canonical purine NTP pyrophosphatase"/>
    <property type="match status" value="1"/>
</dbReference>
<dbReference type="PANTHER" id="PTHR11067:SF9">
    <property type="entry name" value="INOSINE TRIPHOSPHATE PYROPHOSPHATASE"/>
    <property type="match status" value="1"/>
</dbReference>
<dbReference type="PANTHER" id="PTHR11067">
    <property type="entry name" value="INOSINE TRIPHOSPHATE PYROPHOSPHATASE/HAM1 PROTEIN"/>
    <property type="match status" value="1"/>
</dbReference>
<dbReference type="Pfam" id="PF01725">
    <property type="entry name" value="Ham1p_like"/>
    <property type="match status" value="1"/>
</dbReference>
<dbReference type="SUPFAM" id="SSF52972">
    <property type="entry name" value="ITPase-like"/>
    <property type="match status" value="1"/>
</dbReference>
<organism>
    <name type="scientific">Bacillus anthracis</name>
    <dbReference type="NCBI Taxonomy" id="1392"/>
    <lineage>
        <taxon>Bacteria</taxon>
        <taxon>Bacillati</taxon>
        <taxon>Bacillota</taxon>
        <taxon>Bacilli</taxon>
        <taxon>Bacillales</taxon>
        <taxon>Bacillaceae</taxon>
        <taxon>Bacillus</taxon>
        <taxon>Bacillus cereus group</taxon>
    </lineage>
</organism>
<reference key="1">
    <citation type="journal article" date="2003" name="Nature">
        <title>The genome sequence of Bacillus anthracis Ames and comparison to closely related bacteria.</title>
        <authorList>
            <person name="Read T.D."/>
            <person name="Peterson S.N."/>
            <person name="Tourasse N.J."/>
            <person name="Baillie L.W."/>
            <person name="Paulsen I.T."/>
            <person name="Nelson K.E."/>
            <person name="Tettelin H."/>
            <person name="Fouts D.E."/>
            <person name="Eisen J.A."/>
            <person name="Gill S.R."/>
            <person name="Holtzapple E.K."/>
            <person name="Okstad O.A."/>
            <person name="Helgason E."/>
            <person name="Rilstone J."/>
            <person name="Wu M."/>
            <person name="Kolonay J.F."/>
            <person name="Beanan M.J."/>
            <person name="Dodson R.J."/>
            <person name="Brinkac L.M."/>
            <person name="Gwinn M.L."/>
            <person name="DeBoy R.T."/>
            <person name="Madpu R."/>
            <person name="Daugherty S.C."/>
            <person name="Durkin A.S."/>
            <person name="Haft D.H."/>
            <person name="Nelson W.C."/>
            <person name="Peterson J.D."/>
            <person name="Pop M."/>
            <person name="Khouri H.M."/>
            <person name="Radune D."/>
            <person name="Benton J.L."/>
            <person name="Mahamoud Y."/>
            <person name="Jiang L."/>
            <person name="Hance I.R."/>
            <person name="Weidman J.F."/>
            <person name="Berry K.J."/>
            <person name="Plaut R.D."/>
            <person name="Wolf A.M."/>
            <person name="Watkins K.L."/>
            <person name="Nierman W.C."/>
            <person name="Hazen A."/>
            <person name="Cline R.T."/>
            <person name="Redmond C."/>
            <person name="Thwaite J.E."/>
            <person name="White O."/>
            <person name="Salzberg S.L."/>
            <person name="Thomason B."/>
            <person name="Friedlander A.M."/>
            <person name="Koehler T.M."/>
            <person name="Hanna P.C."/>
            <person name="Kolstoe A.-B."/>
            <person name="Fraser C.M."/>
        </authorList>
    </citation>
    <scope>NUCLEOTIDE SEQUENCE [LARGE SCALE GENOMIC DNA]</scope>
    <source>
        <strain>Ames / isolate Porton</strain>
    </source>
</reference>
<reference key="2">
    <citation type="journal article" date="2009" name="J. Bacteriol.">
        <title>The complete genome sequence of Bacillus anthracis Ames 'Ancestor'.</title>
        <authorList>
            <person name="Ravel J."/>
            <person name="Jiang L."/>
            <person name="Stanley S.T."/>
            <person name="Wilson M.R."/>
            <person name="Decker R.S."/>
            <person name="Read T.D."/>
            <person name="Worsham P."/>
            <person name="Keim P.S."/>
            <person name="Salzberg S.L."/>
            <person name="Fraser-Liggett C.M."/>
            <person name="Rasko D.A."/>
        </authorList>
    </citation>
    <scope>NUCLEOTIDE SEQUENCE [LARGE SCALE GENOMIC DNA]</scope>
    <source>
        <strain>Ames ancestor</strain>
    </source>
</reference>
<reference key="3">
    <citation type="submission" date="2004-01" db="EMBL/GenBank/DDBJ databases">
        <title>Complete genome sequence of Bacillus anthracis Sterne.</title>
        <authorList>
            <person name="Brettin T.S."/>
            <person name="Bruce D."/>
            <person name="Challacombe J.F."/>
            <person name="Gilna P."/>
            <person name="Han C."/>
            <person name="Hill K."/>
            <person name="Hitchcock P."/>
            <person name="Jackson P."/>
            <person name="Keim P."/>
            <person name="Longmire J."/>
            <person name="Lucas S."/>
            <person name="Okinaka R."/>
            <person name="Richardson P."/>
            <person name="Rubin E."/>
            <person name="Tice H."/>
        </authorList>
    </citation>
    <scope>NUCLEOTIDE SEQUENCE [LARGE SCALE GENOMIC DNA]</scope>
    <source>
        <strain>Sterne</strain>
    </source>
</reference>
<name>IXTPA_BACAN</name>
<sequence length="202" mass="22849">MKQVVVATKNMGKVREFAELFERFDLEVKSLHDFPHIEEVEETGETFEENAILKADSLSRQLNAIVIADDSGLIVDALNGKPGVYSARFAGEPKDDQANIDKVLQELNEVAFEKRKARFYCALAVAFPEGDKKPVIVNGTCEGFILEQRRGENGFGYDPIFYVEEYKKAMAELSSDEKNAISHRGRALRKLEEKIPEWFLGE</sequence>
<gene>
    <name type="ordered locus">BA_4714</name>
    <name type="ordered locus">GBAA_4714</name>
    <name type="ordered locus">BAS4376</name>
</gene>
<evidence type="ECO:0000255" key="1">
    <source>
        <dbReference type="HAMAP-Rule" id="MF_01405"/>
    </source>
</evidence>
<evidence type="ECO:0000305" key="2"/>
<keyword id="KW-0378">Hydrolase</keyword>
<keyword id="KW-0460">Magnesium</keyword>
<keyword id="KW-0479">Metal-binding</keyword>
<keyword id="KW-0546">Nucleotide metabolism</keyword>
<keyword id="KW-0547">Nucleotide-binding</keyword>
<keyword id="KW-1185">Reference proteome</keyword>
<feature type="chain" id="PRO_0000178119" description="dITP/XTP pyrophosphatase">
    <location>
        <begin position="1"/>
        <end position="202"/>
    </location>
</feature>
<feature type="active site" description="Proton acceptor" evidence="1">
    <location>
        <position position="70"/>
    </location>
</feature>
<feature type="binding site" evidence="1">
    <location>
        <begin position="8"/>
        <end position="13"/>
    </location>
    <ligand>
        <name>substrate</name>
    </ligand>
</feature>
<feature type="binding site" evidence="1">
    <location>
        <position position="41"/>
    </location>
    <ligand>
        <name>Mg(2+)</name>
        <dbReference type="ChEBI" id="CHEBI:18420"/>
    </ligand>
</feature>
<feature type="binding site" evidence="1">
    <location>
        <position position="70"/>
    </location>
    <ligand>
        <name>Mg(2+)</name>
        <dbReference type="ChEBI" id="CHEBI:18420"/>
    </ligand>
</feature>
<feature type="binding site" evidence="1">
    <location>
        <position position="71"/>
    </location>
    <ligand>
        <name>substrate</name>
    </ligand>
</feature>
<feature type="binding site" evidence="1">
    <location>
        <begin position="155"/>
        <end position="158"/>
    </location>
    <ligand>
        <name>substrate</name>
    </ligand>
</feature>
<feature type="binding site" evidence="1">
    <location>
        <position position="178"/>
    </location>
    <ligand>
        <name>substrate</name>
    </ligand>
</feature>
<feature type="binding site" evidence="1">
    <location>
        <begin position="183"/>
        <end position="184"/>
    </location>
    <ligand>
        <name>substrate</name>
    </ligand>
</feature>
<protein>
    <recommendedName>
        <fullName evidence="1">dITP/XTP pyrophosphatase</fullName>
        <ecNumber evidence="1">3.6.1.66</ecNumber>
    </recommendedName>
    <alternativeName>
        <fullName evidence="1">Non-canonical purine NTP pyrophosphatase</fullName>
    </alternativeName>
    <alternativeName>
        <fullName evidence="1">Non-standard purine NTP pyrophosphatase</fullName>
    </alternativeName>
    <alternativeName>
        <fullName evidence="1">Nucleoside-triphosphate diphosphatase</fullName>
    </alternativeName>
    <alternativeName>
        <fullName evidence="1">Nucleoside-triphosphate pyrophosphatase</fullName>
        <shortName evidence="1">NTPase</shortName>
    </alternativeName>
</protein>